<accession>Q9K0J4</accession>
<gene>
    <name type="primary">hisE</name>
    <name type="ordered locus">NMB0603</name>
</gene>
<name>HIS2_NEIMB</name>
<feature type="chain" id="PRO_0000136374" description="Phosphoribosyl-ATP pyrophosphatase">
    <location>
        <begin position="1"/>
        <end position="107"/>
    </location>
</feature>
<dbReference type="EC" id="3.6.1.31"/>
<dbReference type="EMBL" id="AE002098">
    <property type="protein sequence ID" value="AAF41030.1"/>
    <property type="molecule type" value="Genomic_DNA"/>
</dbReference>
<dbReference type="PIR" id="D81178">
    <property type="entry name" value="D81178"/>
</dbReference>
<dbReference type="RefSeq" id="NP_273647.1">
    <property type="nucleotide sequence ID" value="NC_003112.2"/>
</dbReference>
<dbReference type="RefSeq" id="WP_002222845.1">
    <property type="nucleotide sequence ID" value="NC_003112.2"/>
</dbReference>
<dbReference type="SMR" id="Q9K0J4"/>
<dbReference type="STRING" id="122586.NMB0603"/>
<dbReference type="PaxDb" id="122586-NMB0603"/>
<dbReference type="KEGG" id="nme:NMB0603"/>
<dbReference type="PATRIC" id="fig|122586.8.peg.765"/>
<dbReference type="HOGENOM" id="CLU_123337_1_2_4"/>
<dbReference type="InParanoid" id="Q9K0J4"/>
<dbReference type="OrthoDB" id="9814738at2"/>
<dbReference type="UniPathway" id="UPA00031">
    <property type="reaction ID" value="UER00007"/>
</dbReference>
<dbReference type="Proteomes" id="UP000000425">
    <property type="component" value="Chromosome"/>
</dbReference>
<dbReference type="GO" id="GO:0005737">
    <property type="term" value="C:cytoplasm"/>
    <property type="evidence" value="ECO:0007669"/>
    <property type="project" value="UniProtKB-SubCell"/>
</dbReference>
<dbReference type="GO" id="GO:0005524">
    <property type="term" value="F:ATP binding"/>
    <property type="evidence" value="ECO:0007669"/>
    <property type="project" value="UniProtKB-KW"/>
</dbReference>
<dbReference type="GO" id="GO:0004636">
    <property type="term" value="F:phosphoribosyl-ATP diphosphatase activity"/>
    <property type="evidence" value="ECO:0007669"/>
    <property type="project" value="UniProtKB-UniRule"/>
</dbReference>
<dbReference type="GO" id="GO:0000105">
    <property type="term" value="P:L-histidine biosynthetic process"/>
    <property type="evidence" value="ECO:0007669"/>
    <property type="project" value="UniProtKB-UniRule"/>
</dbReference>
<dbReference type="CDD" id="cd11534">
    <property type="entry name" value="NTP-PPase_HisIE_like"/>
    <property type="match status" value="1"/>
</dbReference>
<dbReference type="FunFam" id="1.10.287.1080:FF:000002">
    <property type="entry name" value="Histidine biosynthesis bifunctional protein HisIE"/>
    <property type="match status" value="1"/>
</dbReference>
<dbReference type="Gene3D" id="1.10.287.1080">
    <property type="entry name" value="MazG-like"/>
    <property type="match status" value="1"/>
</dbReference>
<dbReference type="HAMAP" id="MF_01020">
    <property type="entry name" value="HisE"/>
    <property type="match status" value="1"/>
</dbReference>
<dbReference type="InterPro" id="IPR008179">
    <property type="entry name" value="HisE"/>
</dbReference>
<dbReference type="InterPro" id="IPR021130">
    <property type="entry name" value="PRib-ATP_PPHydrolase-like"/>
</dbReference>
<dbReference type="NCBIfam" id="TIGR03188">
    <property type="entry name" value="histidine_hisI"/>
    <property type="match status" value="1"/>
</dbReference>
<dbReference type="NCBIfam" id="NF001611">
    <property type="entry name" value="PRK00400.1-3"/>
    <property type="match status" value="1"/>
</dbReference>
<dbReference type="PANTHER" id="PTHR42945">
    <property type="entry name" value="HISTIDINE BIOSYNTHESIS BIFUNCTIONAL PROTEIN"/>
    <property type="match status" value="1"/>
</dbReference>
<dbReference type="PANTHER" id="PTHR42945:SF9">
    <property type="entry name" value="HISTIDINE BIOSYNTHESIS BIFUNCTIONAL PROTEIN HISIE"/>
    <property type="match status" value="1"/>
</dbReference>
<dbReference type="Pfam" id="PF01503">
    <property type="entry name" value="PRA-PH"/>
    <property type="match status" value="1"/>
</dbReference>
<dbReference type="SUPFAM" id="SSF101386">
    <property type="entry name" value="all-alpha NTP pyrophosphatases"/>
    <property type="match status" value="1"/>
</dbReference>
<evidence type="ECO:0000250" key="1"/>
<evidence type="ECO:0000305" key="2"/>
<proteinExistence type="inferred from homology"/>
<comment type="catalytic activity">
    <reaction>
        <text>1-(5-phospho-beta-D-ribosyl)-ATP + H2O = 1-(5-phospho-beta-D-ribosyl)-5'-AMP + diphosphate + H(+)</text>
        <dbReference type="Rhea" id="RHEA:22828"/>
        <dbReference type="ChEBI" id="CHEBI:15377"/>
        <dbReference type="ChEBI" id="CHEBI:15378"/>
        <dbReference type="ChEBI" id="CHEBI:33019"/>
        <dbReference type="ChEBI" id="CHEBI:59457"/>
        <dbReference type="ChEBI" id="CHEBI:73183"/>
        <dbReference type="EC" id="3.6.1.31"/>
    </reaction>
</comment>
<comment type="pathway">
    <text>Amino-acid biosynthesis; L-histidine biosynthesis; L-histidine from 5-phospho-alpha-D-ribose 1-diphosphate: step 2/9.</text>
</comment>
<comment type="subcellular location">
    <subcellularLocation>
        <location evidence="1">Cytoplasm</location>
    </subcellularLocation>
</comment>
<comment type="similarity">
    <text evidence="2">Belongs to the PRA-PH family.</text>
</comment>
<sequence>MGDSVLSAIQQTITQRKSANPSESYVAQLLHKGEDKILKKVIEEAGEVLMASKDKNPSHLVYEVADLWFHTMILLTHHDLKAEDVLDELARRQGLSGLVEKAARTES</sequence>
<keyword id="KW-0028">Amino-acid biosynthesis</keyword>
<keyword id="KW-0067">ATP-binding</keyword>
<keyword id="KW-0963">Cytoplasm</keyword>
<keyword id="KW-0368">Histidine biosynthesis</keyword>
<keyword id="KW-0378">Hydrolase</keyword>
<keyword id="KW-0547">Nucleotide-binding</keyword>
<keyword id="KW-1185">Reference proteome</keyword>
<protein>
    <recommendedName>
        <fullName>Phosphoribosyl-ATP pyrophosphatase</fullName>
        <shortName>PRA-PH</shortName>
        <ecNumber>3.6.1.31</ecNumber>
    </recommendedName>
</protein>
<reference key="1">
    <citation type="journal article" date="2000" name="Science">
        <title>Complete genome sequence of Neisseria meningitidis serogroup B strain MC58.</title>
        <authorList>
            <person name="Tettelin H."/>
            <person name="Saunders N.J."/>
            <person name="Heidelberg J.F."/>
            <person name="Jeffries A.C."/>
            <person name="Nelson K.E."/>
            <person name="Eisen J.A."/>
            <person name="Ketchum K.A."/>
            <person name="Hood D.W."/>
            <person name="Peden J.F."/>
            <person name="Dodson R.J."/>
            <person name="Nelson W.C."/>
            <person name="Gwinn M.L."/>
            <person name="DeBoy R.T."/>
            <person name="Peterson J.D."/>
            <person name="Hickey E.K."/>
            <person name="Haft D.H."/>
            <person name="Salzberg S.L."/>
            <person name="White O."/>
            <person name="Fleischmann R.D."/>
            <person name="Dougherty B.A."/>
            <person name="Mason T.M."/>
            <person name="Ciecko A."/>
            <person name="Parksey D.S."/>
            <person name="Blair E."/>
            <person name="Cittone H."/>
            <person name="Clark E.B."/>
            <person name="Cotton M.D."/>
            <person name="Utterback T.R."/>
            <person name="Khouri H.M."/>
            <person name="Qin H."/>
            <person name="Vamathevan J.J."/>
            <person name="Gill J."/>
            <person name="Scarlato V."/>
            <person name="Masignani V."/>
            <person name="Pizza M."/>
            <person name="Grandi G."/>
            <person name="Sun L."/>
            <person name="Smith H.O."/>
            <person name="Fraser C.M."/>
            <person name="Moxon E.R."/>
            <person name="Rappuoli R."/>
            <person name="Venter J.C."/>
        </authorList>
    </citation>
    <scope>NUCLEOTIDE SEQUENCE [LARGE SCALE GENOMIC DNA]</scope>
    <source>
        <strain>ATCC BAA-335 / MC58</strain>
    </source>
</reference>
<organism>
    <name type="scientific">Neisseria meningitidis serogroup B (strain ATCC BAA-335 / MC58)</name>
    <dbReference type="NCBI Taxonomy" id="122586"/>
    <lineage>
        <taxon>Bacteria</taxon>
        <taxon>Pseudomonadati</taxon>
        <taxon>Pseudomonadota</taxon>
        <taxon>Betaproteobacteria</taxon>
        <taxon>Neisseriales</taxon>
        <taxon>Neisseriaceae</taxon>
        <taxon>Neisseria</taxon>
    </lineage>
</organism>